<keyword id="KW-0963">Cytoplasm</keyword>
<keyword id="KW-0378">Hydrolase</keyword>
<keyword id="KW-0694">RNA-binding</keyword>
<keyword id="KW-0820">tRNA-binding</keyword>
<reference key="1">
    <citation type="journal article" date="2008" name="Biol. Direct">
        <title>Complete genome sequence of the extremely acidophilic methanotroph isolate V4, Methylacidiphilum infernorum, a representative of the bacterial phylum Verrucomicrobia.</title>
        <authorList>
            <person name="Hou S."/>
            <person name="Makarova K.S."/>
            <person name="Saw J.H."/>
            <person name="Senin P."/>
            <person name="Ly B.V."/>
            <person name="Zhou Z."/>
            <person name="Ren Y."/>
            <person name="Wang J."/>
            <person name="Galperin M.Y."/>
            <person name="Omelchenko M.V."/>
            <person name="Wolf Y.I."/>
            <person name="Yutin N."/>
            <person name="Koonin E.V."/>
            <person name="Stott M.B."/>
            <person name="Mountain B.W."/>
            <person name="Crowe M.A."/>
            <person name="Smirnova A.V."/>
            <person name="Dunfield P.F."/>
            <person name="Feng L."/>
            <person name="Wang L."/>
            <person name="Alam M."/>
        </authorList>
    </citation>
    <scope>NUCLEOTIDE SEQUENCE [LARGE SCALE GENOMIC DNA]</scope>
    <source>
        <strain>Isolate V4</strain>
    </source>
</reference>
<gene>
    <name evidence="1" type="primary">dtd</name>
    <name type="ordered locus">Minf_1384</name>
</gene>
<evidence type="ECO:0000255" key="1">
    <source>
        <dbReference type="HAMAP-Rule" id="MF_00518"/>
    </source>
</evidence>
<sequence>MIGLVQRVKQAAVEIDQLPVCAIGRGILLFLAIEKGDNEKNGDLLIEKVLNCRIFSDQSGKMNLSLLDIRGELLIVPEFTLAGKIAKGKRPSFDMAAPAEVAKKLFDYVSGQIENKYKAVKKGYFGADMSVYLINDGPVTFWLKC</sequence>
<feature type="chain" id="PRO_1000127551" description="D-aminoacyl-tRNA deacylase">
    <location>
        <begin position="1"/>
        <end position="145"/>
    </location>
</feature>
<feature type="short sequence motif" description="Gly-cisPro motif, important for rejection of L-amino acids" evidence="1">
    <location>
        <begin position="137"/>
        <end position="138"/>
    </location>
</feature>
<dbReference type="EC" id="3.1.1.96" evidence="1"/>
<dbReference type="EMBL" id="CP000975">
    <property type="protein sequence ID" value="ACD83438.1"/>
    <property type="molecule type" value="Genomic_DNA"/>
</dbReference>
<dbReference type="RefSeq" id="WP_012463720.1">
    <property type="nucleotide sequence ID" value="NC_010794.1"/>
</dbReference>
<dbReference type="SMR" id="B3DVT5"/>
<dbReference type="STRING" id="481448.Minf_1384"/>
<dbReference type="KEGG" id="min:Minf_1384"/>
<dbReference type="eggNOG" id="COG1490">
    <property type="taxonomic scope" value="Bacteria"/>
</dbReference>
<dbReference type="HOGENOM" id="CLU_076901_1_1_0"/>
<dbReference type="OrthoDB" id="9801395at2"/>
<dbReference type="Proteomes" id="UP000009149">
    <property type="component" value="Chromosome"/>
</dbReference>
<dbReference type="GO" id="GO:0005737">
    <property type="term" value="C:cytoplasm"/>
    <property type="evidence" value="ECO:0007669"/>
    <property type="project" value="UniProtKB-SubCell"/>
</dbReference>
<dbReference type="GO" id="GO:0051500">
    <property type="term" value="F:D-tyrosyl-tRNA(Tyr) deacylase activity"/>
    <property type="evidence" value="ECO:0007669"/>
    <property type="project" value="TreeGrafter"/>
</dbReference>
<dbReference type="GO" id="GO:0106026">
    <property type="term" value="F:Gly-tRNA(Ala) deacylase activity"/>
    <property type="evidence" value="ECO:0007669"/>
    <property type="project" value="UniProtKB-UniRule"/>
</dbReference>
<dbReference type="GO" id="GO:0043908">
    <property type="term" value="F:Ser(Gly)-tRNA(Ala) hydrolase activity"/>
    <property type="evidence" value="ECO:0007669"/>
    <property type="project" value="UniProtKB-UniRule"/>
</dbReference>
<dbReference type="GO" id="GO:0000049">
    <property type="term" value="F:tRNA binding"/>
    <property type="evidence" value="ECO:0007669"/>
    <property type="project" value="UniProtKB-UniRule"/>
</dbReference>
<dbReference type="GO" id="GO:0019478">
    <property type="term" value="P:D-amino acid catabolic process"/>
    <property type="evidence" value="ECO:0007669"/>
    <property type="project" value="UniProtKB-UniRule"/>
</dbReference>
<dbReference type="FunFam" id="3.50.80.10:FF:000001">
    <property type="entry name" value="D-aminoacyl-tRNA deacylase"/>
    <property type="match status" value="1"/>
</dbReference>
<dbReference type="Gene3D" id="3.50.80.10">
    <property type="entry name" value="D-tyrosyl-tRNA(Tyr) deacylase"/>
    <property type="match status" value="1"/>
</dbReference>
<dbReference type="HAMAP" id="MF_00518">
    <property type="entry name" value="Deacylase_Dtd"/>
    <property type="match status" value="1"/>
</dbReference>
<dbReference type="InterPro" id="IPR003732">
    <property type="entry name" value="Daa-tRNA_deacyls_DTD"/>
</dbReference>
<dbReference type="InterPro" id="IPR023509">
    <property type="entry name" value="DTD-like_sf"/>
</dbReference>
<dbReference type="NCBIfam" id="TIGR00256">
    <property type="entry name" value="D-aminoacyl-tRNA deacylase"/>
    <property type="match status" value="1"/>
</dbReference>
<dbReference type="PANTHER" id="PTHR10472:SF5">
    <property type="entry name" value="D-AMINOACYL-TRNA DEACYLASE 1"/>
    <property type="match status" value="1"/>
</dbReference>
<dbReference type="PANTHER" id="PTHR10472">
    <property type="entry name" value="D-TYROSYL-TRNA TYR DEACYLASE"/>
    <property type="match status" value="1"/>
</dbReference>
<dbReference type="Pfam" id="PF02580">
    <property type="entry name" value="Tyr_Deacylase"/>
    <property type="match status" value="1"/>
</dbReference>
<dbReference type="SUPFAM" id="SSF69500">
    <property type="entry name" value="DTD-like"/>
    <property type="match status" value="1"/>
</dbReference>
<proteinExistence type="inferred from homology"/>
<comment type="function">
    <text evidence="1">An aminoacyl-tRNA editing enzyme that deacylates mischarged D-aminoacyl-tRNAs. Also deacylates mischarged glycyl-tRNA(Ala), protecting cells against glycine mischarging by AlaRS. Acts via tRNA-based rather than protein-based catalysis; rejects L-amino acids rather than detecting D-amino acids in the active site. By recycling D-aminoacyl-tRNA to D-amino acids and free tRNA molecules, this enzyme counteracts the toxicity associated with the formation of D-aminoacyl-tRNA entities in vivo and helps enforce protein L-homochirality.</text>
</comment>
<comment type="catalytic activity">
    <reaction evidence="1">
        <text>glycyl-tRNA(Ala) + H2O = tRNA(Ala) + glycine + H(+)</text>
        <dbReference type="Rhea" id="RHEA:53744"/>
        <dbReference type="Rhea" id="RHEA-COMP:9657"/>
        <dbReference type="Rhea" id="RHEA-COMP:13640"/>
        <dbReference type="ChEBI" id="CHEBI:15377"/>
        <dbReference type="ChEBI" id="CHEBI:15378"/>
        <dbReference type="ChEBI" id="CHEBI:57305"/>
        <dbReference type="ChEBI" id="CHEBI:78442"/>
        <dbReference type="ChEBI" id="CHEBI:78522"/>
        <dbReference type="EC" id="3.1.1.96"/>
    </reaction>
</comment>
<comment type="catalytic activity">
    <reaction evidence="1">
        <text>a D-aminoacyl-tRNA + H2O = a tRNA + a D-alpha-amino acid + H(+)</text>
        <dbReference type="Rhea" id="RHEA:13953"/>
        <dbReference type="Rhea" id="RHEA-COMP:10123"/>
        <dbReference type="Rhea" id="RHEA-COMP:10124"/>
        <dbReference type="ChEBI" id="CHEBI:15377"/>
        <dbReference type="ChEBI" id="CHEBI:15378"/>
        <dbReference type="ChEBI" id="CHEBI:59871"/>
        <dbReference type="ChEBI" id="CHEBI:78442"/>
        <dbReference type="ChEBI" id="CHEBI:79333"/>
        <dbReference type="EC" id="3.1.1.96"/>
    </reaction>
</comment>
<comment type="subunit">
    <text evidence="1">Homodimer.</text>
</comment>
<comment type="subcellular location">
    <subcellularLocation>
        <location evidence="1">Cytoplasm</location>
    </subcellularLocation>
</comment>
<comment type="domain">
    <text evidence="1">A Gly-cisPro motif from one monomer fits into the active site of the other monomer to allow specific chiral rejection of L-amino acids.</text>
</comment>
<comment type="similarity">
    <text evidence="1">Belongs to the DTD family.</text>
</comment>
<organism>
    <name type="scientific">Methylacidiphilum infernorum (isolate V4)</name>
    <name type="common">Methylokorus infernorum (strain V4)</name>
    <dbReference type="NCBI Taxonomy" id="481448"/>
    <lineage>
        <taxon>Bacteria</taxon>
        <taxon>Pseudomonadati</taxon>
        <taxon>Verrucomicrobiota</taxon>
        <taxon>Methylacidiphilae</taxon>
        <taxon>Methylacidiphilales</taxon>
        <taxon>Methylacidiphilaceae</taxon>
        <taxon>Methylacidiphilum (ex Ratnadevi et al. 2023)</taxon>
    </lineage>
</organism>
<protein>
    <recommendedName>
        <fullName evidence="1">D-aminoacyl-tRNA deacylase</fullName>
        <shortName evidence="1">DTD</shortName>
        <ecNumber evidence="1">3.1.1.96</ecNumber>
    </recommendedName>
    <alternativeName>
        <fullName evidence="1">Gly-tRNA(Ala) deacylase</fullName>
    </alternativeName>
</protein>
<accession>B3DVT5</accession>
<name>DTD_METI4</name>